<accession>P10184</accession>
<accession>A0A3Q2UJ85</accession>
<accession>F1NMN2</accession>
<accession>Q6XLT0</accession>
<gene>
    <name evidence="23" type="primary">SPINK5</name>
    <name type="synonym">OIH</name>
</gene>
<proteinExistence type="evidence at protein level"/>
<dbReference type="EMBL" id="AADN05000072">
    <property type="status" value="NOT_ANNOTATED_CDS"/>
    <property type="molecule type" value="Genomic_DNA"/>
</dbReference>
<dbReference type="EMBL" id="M16141">
    <property type="protein sequence ID" value="AAA48994.1"/>
    <property type="status" value="ALT_INIT"/>
    <property type="molecule type" value="Genomic_DNA"/>
</dbReference>
<dbReference type="EMBL" id="M15962">
    <property type="protein sequence ID" value="AAA48994.1"/>
    <property type="status" value="JOINED"/>
    <property type="molecule type" value="Genomic_DNA"/>
</dbReference>
<dbReference type="EMBL" id="M16127">
    <property type="protein sequence ID" value="AAA48994.1"/>
    <property type="status" value="JOINED"/>
    <property type="molecule type" value="Genomic_DNA"/>
</dbReference>
<dbReference type="EMBL" id="M16128">
    <property type="protein sequence ID" value="AAA48994.1"/>
    <property type="status" value="JOINED"/>
    <property type="molecule type" value="Genomic_DNA"/>
</dbReference>
<dbReference type="EMBL" id="M16129">
    <property type="protein sequence ID" value="AAA48994.1"/>
    <property type="status" value="JOINED"/>
    <property type="molecule type" value="Genomic_DNA"/>
</dbReference>
<dbReference type="EMBL" id="M16130">
    <property type="protein sequence ID" value="AAA48994.1"/>
    <property type="status" value="JOINED"/>
    <property type="molecule type" value="Genomic_DNA"/>
</dbReference>
<dbReference type="EMBL" id="M16131">
    <property type="protein sequence ID" value="AAA48994.1"/>
    <property type="status" value="JOINED"/>
    <property type="molecule type" value="Genomic_DNA"/>
</dbReference>
<dbReference type="EMBL" id="M16132">
    <property type="protein sequence ID" value="AAA48994.1"/>
    <property type="status" value="JOINED"/>
    <property type="molecule type" value="Genomic_DNA"/>
</dbReference>
<dbReference type="EMBL" id="M16133">
    <property type="protein sequence ID" value="AAA48994.1"/>
    <property type="status" value="JOINED"/>
    <property type="molecule type" value="Genomic_DNA"/>
</dbReference>
<dbReference type="EMBL" id="M16134">
    <property type="protein sequence ID" value="AAA48994.1"/>
    <property type="status" value="JOINED"/>
    <property type="molecule type" value="Genomic_DNA"/>
</dbReference>
<dbReference type="EMBL" id="M16135">
    <property type="protein sequence ID" value="AAA48994.1"/>
    <property type="status" value="JOINED"/>
    <property type="molecule type" value="Genomic_DNA"/>
</dbReference>
<dbReference type="EMBL" id="M16136">
    <property type="protein sequence ID" value="AAA48994.1"/>
    <property type="status" value="JOINED"/>
    <property type="molecule type" value="Genomic_DNA"/>
</dbReference>
<dbReference type="EMBL" id="M16137">
    <property type="protein sequence ID" value="AAA48994.1"/>
    <property type="status" value="JOINED"/>
    <property type="molecule type" value="Genomic_DNA"/>
</dbReference>
<dbReference type="EMBL" id="M16138">
    <property type="protein sequence ID" value="AAA48994.1"/>
    <property type="status" value="JOINED"/>
    <property type="molecule type" value="Genomic_DNA"/>
</dbReference>
<dbReference type="EMBL" id="M16139">
    <property type="protein sequence ID" value="AAA48994.1"/>
    <property type="status" value="JOINED"/>
    <property type="molecule type" value="Genomic_DNA"/>
</dbReference>
<dbReference type="EMBL" id="M16140">
    <property type="protein sequence ID" value="AAA48994.1"/>
    <property type="status" value="JOINED"/>
    <property type="molecule type" value="Genomic_DNA"/>
</dbReference>
<dbReference type="EMBL" id="AY225161">
    <property type="protein sequence ID" value="AAP50264.1"/>
    <property type="molecule type" value="Genomic_DNA"/>
</dbReference>
<dbReference type="PIR" id="A26730">
    <property type="entry name" value="A26730"/>
</dbReference>
<dbReference type="RefSeq" id="NP_001025783.2">
    <property type="nucleotide sequence ID" value="NM_001030612.2"/>
</dbReference>
<dbReference type="SMR" id="P10184"/>
<dbReference type="IntAct" id="P10184">
    <property type="interactions" value="1"/>
</dbReference>
<dbReference type="STRING" id="9031.ENSGALP00000005535"/>
<dbReference type="Allergome" id="10163">
    <property type="allergen name" value="Gal d OIH"/>
</dbReference>
<dbReference type="MEROPS" id="I01.004"/>
<dbReference type="MEROPS" id="I01.006"/>
<dbReference type="GlyCosmos" id="P10184">
    <property type="glycosylation" value="3 sites, No reported glycans"/>
</dbReference>
<dbReference type="GlyGen" id="P10184">
    <property type="glycosylation" value="3 sites"/>
</dbReference>
<dbReference type="GeneID" id="416235"/>
<dbReference type="KEGG" id="gga:416235"/>
<dbReference type="CTD" id="11005"/>
<dbReference type="VEuPathDB" id="HostDB:geneid_416235"/>
<dbReference type="HOGENOM" id="CLU_579946_0_0_1"/>
<dbReference type="InParanoid" id="P10184"/>
<dbReference type="OrthoDB" id="126772at2759"/>
<dbReference type="PhylomeDB" id="P10184"/>
<dbReference type="PRO" id="PR:P10184"/>
<dbReference type="Proteomes" id="UP000000539">
    <property type="component" value="Chromosome 13"/>
</dbReference>
<dbReference type="Bgee" id="ENSGALG00000031496">
    <property type="expression patterns" value="Expressed in liver and 9 other cell types or tissues"/>
</dbReference>
<dbReference type="GO" id="GO:0005576">
    <property type="term" value="C:extracellular region"/>
    <property type="evidence" value="ECO:0000304"/>
    <property type="project" value="AgBase"/>
</dbReference>
<dbReference type="GO" id="GO:0005615">
    <property type="term" value="C:extracellular space"/>
    <property type="evidence" value="ECO:0000304"/>
    <property type="project" value="AgBase"/>
</dbReference>
<dbReference type="GO" id="GO:0032991">
    <property type="term" value="C:protein-containing complex"/>
    <property type="evidence" value="ECO:0000314"/>
    <property type="project" value="AgBase"/>
</dbReference>
<dbReference type="GO" id="GO:0008200">
    <property type="term" value="F:ion channel inhibitor activity"/>
    <property type="evidence" value="ECO:0000314"/>
    <property type="project" value="AgBase"/>
</dbReference>
<dbReference type="GO" id="GO:0030414">
    <property type="term" value="F:peptidase inhibitor activity"/>
    <property type="evidence" value="ECO:0000314"/>
    <property type="project" value="AgBase"/>
</dbReference>
<dbReference type="GO" id="GO:0019870">
    <property type="term" value="F:potassium channel inhibitor activity"/>
    <property type="evidence" value="ECO:0000314"/>
    <property type="project" value="AgBase"/>
</dbReference>
<dbReference type="GO" id="GO:0002020">
    <property type="term" value="F:protease binding"/>
    <property type="evidence" value="ECO:0000314"/>
    <property type="project" value="AgBase"/>
</dbReference>
<dbReference type="GO" id="GO:0004867">
    <property type="term" value="F:serine-type endopeptidase inhibitor activity"/>
    <property type="evidence" value="ECO:0000314"/>
    <property type="project" value="AgBase"/>
</dbReference>
<dbReference type="GO" id="GO:0045071">
    <property type="term" value="P:negative regulation of viral genome replication"/>
    <property type="evidence" value="ECO:0000314"/>
    <property type="project" value="AgBase"/>
</dbReference>
<dbReference type="GO" id="GO:0051412">
    <property type="term" value="P:response to corticosterone"/>
    <property type="evidence" value="ECO:0000314"/>
    <property type="project" value="AgBase"/>
</dbReference>
<dbReference type="CDD" id="cd00104">
    <property type="entry name" value="KAZAL_FS"/>
    <property type="match status" value="1"/>
</dbReference>
<dbReference type="CDD" id="cd01327">
    <property type="entry name" value="KAZAL_PSTI"/>
    <property type="match status" value="1"/>
</dbReference>
<dbReference type="FunFam" id="3.30.60.30:FF:000036">
    <property type="entry name" value="Ovomucoid"/>
    <property type="match status" value="6"/>
</dbReference>
<dbReference type="FunFam" id="3.30.60.30:FF:000037">
    <property type="entry name" value="Ovomucoid"/>
    <property type="match status" value="1"/>
</dbReference>
<dbReference type="Gene3D" id="3.30.60.30">
    <property type="match status" value="7"/>
</dbReference>
<dbReference type="InterPro" id="IPR002350">
    <property type="entry name" value="Kazal_dom"/>
</dbReference>
<dbReference type="InterPro" id="IPR036058">
    <property type="entry name" value="Kazal_dom_sf"/>
</dbReference>
<dbReference type="PANTHER" id="PTHR21312:SF28">
    <property type="entry name" value="OVOINHIBITOR-RELATED"/>
    <property type="match status" value="1"/>
</dbReference>
<dbReference type="PANTHER" id="PTHR21312">
    <property type="entry name" value="SERINE PROTEASE INHIBITOR"/>
    <property type="match status" value="1"/>
</dbReference>
<dbReference type="Pfam" id="PF00050">
    <property type="entry name" value="Kazal_1"/>
    <property type="match status" value="7"/>
</dbReference>
<dbReference type="SMART" id="SM00280">
    <property type="entry name" value="KAZAL"/>
    <property type="match status" value="7"/>
</dbReference>
<dbReference type="SUPFAM" id="SSF100895">
    <property type="entry name" value="Kazal-type serine protease inhibitors"/>
    <property type="match status" value="7"/>
</dbReference>
<dbReference type="PROSITE" id="PS00282">
    <property type="entry name" value="KAZAL_1"/>
    <property type="match status" value="7"/>
</dbReference>
<dbReference type="PROSITE" id="PS51465">
    <property type="entry name" value="KAZAL_2"/>
    <property type="match status" value="7"/>
</dbReference>
<comment type="function">
    <text evidence="4 5 6 8 13 14 15 24">Serine protease inhibitor involved in antimicrobial egg defense preventing contamination of table eggs (non-fertilized eggs) and protecting the chick embryo (fertilized eggs) (Probable). Inhibits trypsin, chymotrypsin, elastase, subtilisin and a proteinase of fungus Aspergillus oryzae (PubMed:13944692, PubMed:14519973, PubMed:14609095, PubMed:22010862, PubMed:6838526, PubMed:6904299). Inhibits calcium-activated potassium channels KCNMA1 (bovine) and slo (Drosophila) (PubMed:8973172). Has antibacterial activity against B.thuringiensis LMSA 3.06.004, but not against S.aureus CIP 103 811, P.aeruginosa PAO1, B.cereus ATCC6464 or B.subtilis ATCC 6633 (PubMed:22010862).</text>
</comment>
<comment type="interaction">
    <interactant intactId="EBI-6663991">
        <id>P10184</id>
    </interactant>
    <interactant intactId="EBI-6664027">
        <id>P00766</id>
    </interactant>
    <organismsDiffer>true</organismsDiffer>
    <experiments>2</experiments>
</comment>
<comment type="subcellular location">
    <subcellularLocation>
        <location evidence="8">Secreted</location>
    </subcellularLocation>
</comment>
<comment type="alternative products">
    <event type="alternative splicing"/>
    <isoform>
        <id>P10184-1</id>
        <name>1</name>
        <sequence type="displayed"/>
    </isoform>
    <isoform>
        <id>P10184-2</id>
        <name>2</name>
        <sequence type="described" ref="VSP_060580"/>
    </isoform>
</comment>
<comment type="tissue specificity">
    <text evidence="3 5 6 7 8 9 10 12 13">Expressed in oviduct (at protein level) (PubMed:3571241). Expressed in egg white (at protein level) (PubMed:14519973, PubMed:23122126, PubMed:25436390, PubMed:6838526). Expressed in egg yolk plasma of non-fertilized eggs (at protein level) (PubMed:22010862). Expressed in the magnum of the oviduct (at protein level) (PubMed:25436390). Expressed in oviduct (PubMed:14609095, PubMed:3571241). Expressed in liver (PubMed:11572089, PubMed:22010862, PubMed:3571241). Expressed in the cortico-medullary border region of the bursa of Fabricius by the bursal secretory dendritic-like cells (PubMed:15252730). Highly expressed in the magnum of the oviduct, and at a lower level in uterus. Weakly expressed in white isthmus and very weakly in infundibulum. Not expressed in duodenum and kidney (PubMed:22010862).</text>
</comment>
<comment type="developmental stage">
    <text evidence="8">Expressed in liver of pre-laying and egg-laying hens throughout sexual maturation. Expression increases gradually from 13 weeks of age reaching its maximum at 15 weeks of age (pre-laying hens). A significant decrease in expression is observed in 41-week-old hens (egg-laying), a level that is significantly lower than that measured initially in 13-week-old pullets.</text>
</comment>
<comment type="induction">
    <text evidence="3 8 10">Expression is regulated by dietary stress. Significantly increased expression between days 0 to 5 in egg whites of eggs laid by corticosterone-fed hens (at protein level). Decreased expression at day 14 in the magnum of the oviduct in the corticosterone-fed laying hens (PubMed:25436390). Significantly increased expression by estrogen. Rapidly up-regulated within 0.5 hour after extrogen exposure with a peak at 1-4 hours and diminishing thereafter (PubMed:11572089). Up-regulated during sexual maturation of pullets (PubMed:22010862).</text>
</comment>
<comment type="domain">
    <text evidence="14">Seems to have at least five separate non-overlapping active inhibitory domains; two for trypsin, two for chymotrypsin and one for elastase. They can be bound to the domains simultaneously.</text>
</comment>
<comment type="PTM">
    <text evidence="11">Glycosylated.</text>
</comment>
<comment type="allergen">
    <text evidence="9 13">Causes an allergic reaction in humans. Binds to IgE of egg-allergic patients. Immunoreactivity is lost by simulated gastric and gastroduodenal digestion (PubMed:23122126). Binds to rabbit anti-ovomucoid IgG antibody indicating the cross-reactivity between this protein and the ovomucoid protein from egg white (PubMed:6838526).</text>
</comment>
<comment type="biotechnology">
    <text evidence="5">The galactomannan conjugate of this protein prepared through the Maillard reaction shows almost the same inhibitory activity toward trypsin, chymotrypsin and elastase, with stronger heat and emulsion stability, and better emulsifying properties than the untreated protein. The conjugate can therefore be useful for industrial application.</text>
</comment>
<comment type="miscellaneous">
    <text evidence="11">Prevents symptomatic gastoroenteritis in vivo in a mouse model of rotavirus infection. Significantly inhibits intestinal replication of EDIM strain of murine rotavirus in infant mice up to 4 days after intragastrical administration of the virus.</text>
</comment>
<comment type="sequence caution" evidence="23">
    <conflict type="erroneous initiation">
        <sequence resource="EMBL-CDS" id="AAA48994"/>
    </conflict>
    <text>Extended N-terminus.</text>
</comment>
<feature type="chain" id="PRO_0000016578" description="Ovoinhibitor">
    <location>
        <begin position="1"/>
        <end position="517"/>
    </location>
</feature>
<feature type="domain" description="Kazal-like 1" evidence="2">
    <location>
        <begin position="67"/>
        <end position="132"/>
    </location>
</feature>
<feature type="domain" description="Kazal-like 2" evidence="2">
    <location>
        <begin position="133"/>
        <end position="197"/>
    </location>
</feature>
<feature type="domain" description="Kazal-like 3" evidence="2">
    <location>
        <begin position="198"/>
        <end position="263"/>
    </location>
</feature>
<feature type="domain" description="Kazal-like 4" evidence="2">
    <location>
        <begin position="264"/>
        <end position="329"/>
    </location>
</feature>
<feature type="domain" description="Kazal-like 5" evidence="2">
    <location>
        <begin position="330"/>
        <end position="394"/>
    </location>
</feature>
<feature type="domain" description="Kazal-like 6" evidence="2">
    <location>
        <begin position="395"/>
        <end position="460"/>
    </location>
</feature>
<feature type="domain" description="Kazal-like 7" evidence="2">
    <location>
        <begin position="461"/>
        <end position="517"/>
    </location>
</feature>
<feature type="site" description="Reactive bond 1 for trypsin" evidence="2">
    <location>
        <begin position="92"/>
        <end position="93"/>
    </location>
</feature>
<feature type="site" description="Reactive bond 2 for trypsin" evidence="2">
    <location>
        <begin position="157"/>
        <end position="158"/>
    </location>
</feature>
<feature type="site" description="Reactive bond 3 for trypsin" evidence="2">
    <location>
        <begin position="223"/>
        <end position="224"/>
    </location>
</feature>
<feature type="site" description="Reactive bond 4 for trypsin" evidence="2">
    <location>
        <begin position="289"/>
        <end position="290"/>
    </location>
</feature>
<feature type="site" description="Reactive bond 5 for chymotrypsin" evidence="2">
    <location>
        <begin position="354"/>
        <end position="355"/>
    </location>
</feature>
<feature type="site" description="Reactive bond 6 for chymotrypsin and elastase" evidence="2">
    <location>
        <begin position="420"/>
        <end position="421"/>
    </location>
</feature>
<feature type="site" description="Reactive bond 7 for chymotrypsin and elastase" evidence="2">
    <location>
        <begin position="479"/>
        <end position="480"/>
    </location>
</feature>
<feature type="glycosylation site" description="N-linked (GlcNAc...) asparagine" evidence="1">
    <location>
        <position position="72"/>
    </location>
</feature>
<feature type="glycosylation site" description="N-linked (GlcNAc...) asparagine" evidence="1">
    <location>
        <position position="186"/>
    </location>
</feature>
<feature type="glycosylation site" description="N-linked (GlcNAc...) asparagine" evidence="1">
    <location>
        <position position="506"/>
    </location>
</feature>
<feature type="disulfide bond" evidence="2">
    <location>
        <begin position="73"/>
        <end position="112"/>
    </location>
</feature>
<feature type="disulfide bond" evidence="2">
    <location>
        <begin position="90"/>
        <end position="109"/>
    </location>
</feature>
<feature type="disulfide bond" evidence="2">
    <location>
        <begin position="98"/>
        <end position="130"/>
    </location>
</feature>
<feature type="disulfide bond" evidence="2">
    <location>
        <begin position="139"/>
        <end position="177"/>
    </location>
</feature>
<feature type="disulfide bond" evidence="2">
    <location>
        <begin position="155"/>
        <end position="174"/>
    </location>
</feature>
<feature type="disulfide bond" evidence="2">
    <location>
        <begin position="163"/>
        <end position="195"/>
    </location>
</feature>
<feature type="disulfide bond" evidence="2">
    <location>
        <begin position="204"/>
        <end position="243"/>
    </location>
</feature>
<feature type="disulfide bond" evidence="2">
    <location>
        <begin position="221"/>
        <end position="240"/>
    </location>
</feature>
<feature type="disulfide bond" evidence="2">
    <location>
        <begin position="229"/>
        <end position="261"/>
    </location>
</feature>
<feature type="disulfide bond" evidence="2">
    <location>
        <begin position="270"/>
        <end position="309"/>
    </location>
</feature>
<feature type="disulfide bond" evidence="2">
    <location>
        <begin position="287"/>
        <end position="306"/>
    </location>
</feature>
<feature type="disulfide bond" evidence="2">
    <location>
        <begin position="295"/>
        <end position="327"/>
    </location>
</feature>
<feature type="disulfide bond" evidence="2">
    <location>
        <begin position="336"/>
        <end position="374"/>
    </location>
</feature>
<feature type="disulfide bond" evidence="2">
    <location>
        <begin position="352"/>
        <end position="371"/>
    </location>
</feature>
<feature type="disulfide bond" evidence="2">
    <location>
        <begin position="360"/>
        <end position="392"/>
    </location>
</feature>
<feature type="disulfide bond" evidence="2">
    <location>
        <begin position="401"/>
        <end position="440"/>
    </location>
</feature>
<feature type="disulfide bond" evidence="2">
    <location>
        <begin position="418"/>
        <end position="437"/>
    </location>
</feature>
<feature type="disulfide bond" evidence="2">
    <location>
        <begin position="426"/>
        <end position="458"/>
    </location>
</feature>
<feature type="disulfide bond" evidence="2">
    <location>
        <begin position="467"/>
        <end position="499"/>
    </location>
</feature>
<feature type="disulfide bond" evidence="2">
    <location>
        <begin position="477"/>
        <end position="496"/>
    </location>
</feature>
<feature type="disulfide bond" evidence="2">
    <location>
        <begin position="485"/>
        <end position="517"/>
    </location>
</feature>
<feature type="splice variant" id="VSP_060580" description="In isoform 2.">
    <original>MTDWVLHHKVGPLDMTTRYIFPLLPLPFLPHSESKRAVCAPRCSAMRTARQFVQVALALCCFADIAFGIE</original>
    <variation>MIPQ</variation>
    <location>
        <begin position="1"/>
        <end position="70"/>
    </location>
</feature>
<feature type="sequence conflict" description="In Ref. 2; AAA48994/AA sequence and 5; AA sequence." ref="2 5">
    <original>T</original>
    <variation>M</variation>
    <location>
        <position position="136"/>
    </location>
</feature>
<feature type="sequence conflict" description="In Ref. 2; AA sequence." evidence="23" ref="2">
    <location>
        <position position="378"/>
    </location>
</feature>
<reference evidence="26" key="1">
    <citation type="journal article" date="2004" name="Nature">
        <title>Sequence and comparative analysis of the chicken genome provide unique perspectives on vertebrate evolution.</title>
        <authorList>
            <person name="Hillier L.W."/>
            <person name="Miller W."/>
            <person name="Birney E."/>
            <person name="Warren W."/>
            <person name="Hardison R.C."/>
            <person name="Ponting C.P."/>
            <person name="Bork P."/>
            <person name="Burt D.W."/>
            <person name="Groenen M.A.M."/>
            <person name="Delany M.E."/>
            <person name="Dodgson J.B."/>
            <person name="Chinwalla A.T."/>
            <person name="Cliften P.F."/>
            <person name="Clifton S.W."/>
            <person name="Delehaunty K.D."/>
            <person name="Fronick C."/>
            <person name="Fulton R.S."/>
            <person name="Graves T.A."/>
            <person name="Kremitzki C."/>
            <person name="Layman D."/>
            <person name="Magrini V."/>
            <person name="McPherson J.D."/>
            <person name="Miner T.L."/>
            <person name="Minx P."/>
            <person name="Nash W.E."/>
            <person name="Nhan M.N."/>
            <person name="Nelson J.O."/>
            <person name="Oddy L.G."/>
            <person name="Pohl C.S."/>
            <person name="Randall-Maher J."/>
            <person name="Smith S.M."/>
            <person name="Wallis J.W."/>
            <person name="Yang S.-P."/>
            <person name="Romanov M.N."/>
            <person name="Rondelli C.M."/>
            <person name="Paton B."/>
            <person name="Smith J."/>
            <person name="Morrice D."/>
            <person name="Daniels L."/>
            <person name="Tempest H.G."/>
            <person name="Robertson L."/>
            <person name="Masabanda J.S."/>
            <person name="Griffin D.K."/>
            <person name="Vignal A."/>
            <person name="Fillon V."/>
            <person name="Jacobbson L."/>
            <person name="Kerje S."/>
            <person name="Andersson L."/>
            <person name="Crooijmans R.P."/>
            <person name="Aerts J."/>
            <person name="van der Poel J.J."/>
            <person name="Ellegren H."/>
            <person name="Caldwell R.B."/>
            <person name="Hubbard S.J."/>
            <person name="Grafham D.V."/>
            <person name="Kierzek A.M."/>
            <person name="McLaren S.R."/>
            <person name="Overton I.M."/>
            <person name="Arakawa H."/>
            <person name="Beattie K.J."/>
            <person name="Bezzubov Y."/>
            <person name="Boardman P.E."/>
            <person name="Bonfield J.K."/>
            <person name="Croning M.D.R."/>
            <person name="Davies R.M."/>
            <person name="Francis M.D."/>
            <person name="Humphray S.J."/>
            <person name="Scott C.E."/>
            <person name="Taylor R.G."/>
            <person name="Tickle C."/>
            <person name="Brown W.R.A."/>
            <person name="Rogers J."/>
            <person name="Buerstedde J.-M."/>
            <person name="Wilson S.A."/>
            <person name="Stubbs L."/>
            <person name="Ovcharenko I."/>
            <person name="Gordon L."/>
            <person name="Lucas S."/>
            <person name="Miller M.M."/>
            <person name="Inoko H."/>
            <person name="Shiina T."/>
            <person name="Kaufman J."/>
            <person name="Salomonsen J."/>
            <person name="Skjoedt K."/>
            <person name="Wong G.K.-S."/>
            <person name="Wang J."/>
            <person name="Liu B."/>
            <person name="Wang J."/>
            <person name="Yu J."/>
            <person name="Yang H."/>
            <person name="Nefedov M."/>
            <person name="Koriabine M."/>
            <person name="Dejong P.J."/>
            <person name="Goodstadt L."/>
            <person name="Webber C."/>
            <person name="Dickens N.J."/>
            <person name="Letunic I."/>
            <person name="Suyama M."/>
            <person name="Torrents D."/>
            <person name="von Mering C."/>
            <person name="Zdobnov E.M."/>
            <person name="Makova K."/>
            <person name="Nekrutenko A."/>
            <person name="Elnitski L."/>
            <person name="Eswara P."/>
            <person name="King D.C."/>
            <person name="Yang S.-P."/>
            <person name="Tyekucheva S."/>
            <person name="Radakrishnan A."/>
            <person name="Harris R.S."/>
            <person name="Chiaromonte F."/>
            <person name="Taylor J."/>
            <person name="He J."/>
            <person name="Rijnkels M."/>
            <person name="Griffiths-Jones S."/>
            <person name="Ureta-Vidal A."/>
            <person name="Hoffman M.M."/>
            <person name="Severin J."/>
            <person name="Searle S.M.J."/>
            <person name="Law A.S."/>
            <person name="Speed D."/>
            <person name="Waddington D."/>
            <person name="Cheng Z."/>
            <person name="Tuzun E."/>
            <person name="Eichler E."/>
            <person name="Bao Z."/>
            <person name="Flicek P."/>
            <person name="Shteynberg D.D."/>
            <person name="Brent M.R."/>
            <person name="Bye J.M."/>
            <person name="Huckle E.J."/>
            <person name="Chatterji S."/>
            <person name="Dewey C."/>
            <person name="Pachter L."/>
            <person name="Kouranov A."/>
            <person name="Mourelatos Z."/>
            <person name="Hatzigeorgiou A.G."/>
            <person name="Paterson A.H."/>
            <person name="Ivarie R."/>
            <person name="Brandstrom M."/>
            <person name="Axelsson E."/>
            <person name="Backstrom N."/>
            <person name="Berlin S."/>
            <person name="Webster M.T."/>
            <person name="Pourquie O."/>
            <person name="Reymond A."/>
            <person name="Ucla C."/>
            <person name="Antonarakis S.E."/>
            <person name="Long M."/>
            <person name="Emerson J.J."/>
            <person name="Betran E."/>
            <person name="Dupanloup I."/>
            <person name="Kaessmann H."/>
            <person name="Hinrichs A.S."/>
            <person name="Bejerano G."/>
            <person name="Furey T.S."/>
            <person name="Harte R.A."/>
            <person name="Raney B."/>
            <person name="Siepel A."/>
            <person name="Kent W.J."/>
            <person name="Haussler D."/>
            <person name="Eyras E."/>
            <person name="Castelo R."/>
            <person name="Abril J.F."/>
            <person name="Castellano S."/>
            <person name="Camara F."/>
            <person name="Parra G."/>
            <person name="Guigo R."/>
            <person name="Bourque G."/>
            <person name="Tesler G."/>
            <person name="Pevzner P.A."/>
            <person name="Smit A."/>
            <person name="Fulton L.A."/>
            <person name="Mardis E.R."/>
            <person name="Wilson R.K."/>
        </authorList>
    </citation>
    <scope>NUCLEOTIDE SEQUENCE [LARGE SCALE GENOMIC DNA]</scope>
    <source>
        <strain evidence="26">Red jungle fowl</strain>
    </source>
</reference>
<reference key="2">
    <citation type="journal article" date="1987" name="J. Biol. Chem.">
        <title>Ovoinhibitor introns specify functional domains as in the related and linked ovomucoid gene.</title>
        <authorList>
            <person name="Scott M.J."/>
            <person name="Huckaby C.S."/>
            <person name="Kato I."/>
            <person name="Kohr W.J."/>
            <person name="Laskowski M. Jr."/>
            <person name="Tsai M.-J."/>
            <person name="O'Malley B.W."/>
        </authorList>
    </citation>
    <scope>NUCLEOTIDE SEQUENCE [GENOMIC DNA] OF 34-517</scope>
    <scope>PROTEIN SEQUENCE OF 69-517 (ISOFORM 1)</scope>
    <scope>TISSUE SPECIFICITY</scope>
    <source>
        <tissue evidence="21">Oviduct</tissue>
    </source>
</reference>
<reference key="3">
    <citation type="journal article" date="2014" name="J. Agric. Food Chem.">
        <title>Differential abundance of egg white proteins in laying hens treated with corticosterone.</title>
        <authorList>
            <person name="Kim J."/>
            <person name="Choi Y.H."/>
        </authorList>
    </citation>
    <scope>PROTEIN SEQUENCE OF 82-93; 92-117; 116-125; 133-148; 147-158; 189-197; 216-224; 223-251; 262-278; 321-329; 391-404; 457-465; 472-496 AND 495-508</scope>
    <scope>TISSUE SPECIFICITY</scope>
    <scope>INDUCTION</scope>
    <scope>IDENTIFICATION BY MASS SPECTROMETRY</scope>
    <source>
        <tissue evidence="20">Egg white</tissue>
    </source>
</reference>
<reference key="4">
    <citation type="journal article" date="2004" name="Cell Tissue Res.">
        <title>Ovoinhibitor in the chicken bursa of Fabricius: identification, isolation, and localization.</title>
        <authorList>
            <person name="Moore R.W."/>
            <person name="Hargis B.M."/>
            <person name="Porter T.E."/>
            <person name="Caldwell D.Y."/>
            <person name="Oubre C.M."/>
            <person name="Vandesande F."/>
            <person name="Berghman L.R."/>
        </authorList>
    </citation>
    <scope>PROTEIN SEQUENCE OF 83-92 AND 149-157</scope>
    <scope>IDENTIFICATION BY MASS SPECTROMETRY</scope>
    <scope>TISSUE SPECIFICITY</scope>
    <source>
        <tissue evidence="17">Bursa of Fabricius</tissue>
    </source>
</reference>
<reference key="5">
    <citation type="journal article" date="2011" name="J. Agric. Food Chem.">
        <title>Antimicrobial potential of egg yolk ovoinhibitor, a multidomain Kazal-like inhibitor of chicken egg.</title>
        <authorList>
            <person name="Bourin M."/>
            <person name="Gautron J."/>
            <person name="Berges M."/>
            <person name="Attucci S."/>
            <person name="Le Blay G."/>
            <person name="Labas V."/>
            <person name="Nys Y."/>
            <person name="Rehault-Godbert S."/>
        </authorList>
    </citation>
    <scope>PROTEIN SEQUENCE OF 93-116; 134-147; 190-213; 197-216; 224-250; 261-277; 263-277; 473-495 AND 508-517</scope>
    <scope>FUNCTION</scope>
    <scope>SUBCELLULAR LOCATION</scope>
    <scope>TISSUE SPECIFICITY</scope>
    <scope>DEVELOPMENTAL STAGE</scope>
    <scope>INDUCTION</scope>
    <scope>IDENTIFICATION BY MASS SPECTROMETRY</scope>
    <source>
        <tissue evidence="18">Egg yolk</tissue>
    </source>
</reference>
<reference evidence="25" key="6">
    <citation type="journal article" date="2004" name="Anim. Genet.">
        <title>Linkage mapping of chicken ovoinhibitor and ovomucoid genes to chromosome 13.</title>
        <authorList>
            <person name="Kinoshita K."/>
            <person name="Shimogiri T."/>
            <person name="Okamoto S."/>
            <person name="Yoshizawa K."/>
            <person name="Mannen H."/>
            <person name="Ibrahim H.R."/>
            <person name="Cheng H.H."/>
            <person name="Maeda Y."/>
        </authorList>
    </citation>
    <scope>NUCLEOTIDE SEQUENCE [GENOMIC DNA] OF 493-512</scope>
</reference>
<reference key="7">
    <citation type="journal article" date="1963" name="J. Biol. Chem.">
        <title>The specificities of chicken ovomucoid and ovoinhibitor.</title>
        <authorList>
            <person name="Feeney R.E."/>
            <person name="Stevens F.C."/>
            <person name="Osuga D.T."/>
        </authorList>
    </citation>
    <scope>FUNCTION</scope>
</reference>
<reference key="8">
    <citation type="journal article" date="1980" name="Eur. J. Biochem.">
        <title>Stoichiometry of interaction of chicken ovoinhibitor with pancreatic trypsin, chymotrypsin and elastase I.</title>
        <authorList>
            <person name="Gertler A."/>
            <person name="Ben-Valid I."/>
        </authorList>
    </citation>
    <scope>FUNCTION</scope>
    <scope>DOMAIN</scope>
</reference>
<reference key="9">
    <citation type="journal article" date="1983" name="Biochem. Biophys. Res. Commun.">
        <title>Ovomucoid and ovoinhibitor isolated from chicken egg white are immunologically cross-reactive.</title>
        <authorList>
            <person name="Matsuda T."/>
            <person name="Watanabe K."/>
            <person name="Nakamura R."/>
        </authorList>
    </citation>
    <scope>FUNCTION</scope>
    <scope>TISSUE SPECIFICITY</scope>
    <scope>ALLERGEN</scope>
</reference>
<reference key="10">
    <citation type="journal article" date="1987" name="J. Clin. Invest.">
        <title>Sialic acid glycoproteins inhibit in vitro and in vivo replication of rotaviruses.</title>
        <authorList>
            <person name="Yolken R.H."/>
            <person name="Willoughby R."/>
            <person name="Wee S.B."/>
            <person name="Miskuff R."/>
            <person name="Vonderfecht S."/>
        </authorList>
    </citation>
    <scope>GLYCOSYLATION</scope>
    <scope>MISCELLANEOUS</scope>
</reference>
<reference key="11">
    <citation type="journal article" date="1996" name="Biochemistry">
        <title>An evolutionarily conserved binding site for serine proteinase inhibitors in large conductance calcium-activated potassium channels.</title>
        <authorList>
            <person name="Moss G.W.J."/>
            <person name="Marshall J."/>
            <person name="Morabito M."/>
            <person name="Howe J.R."/>
            <person name="Moczydlowski E."/>
        </authorList>
    </citation>
    <scope>FUNCTION</scope>
</reference>
<reference key="12">
    <citation type="journal article" date="2001" name="Cell Tissue Res.">
        <title>Identification of estrogen-responsive genes in chick liver.</title>
        <authorList>
            <person name="Zhu Y."/>
            <person name="Wang M."/>
            <person name="Lin H."/>
            <person name="Li Z."/>
            <person name="Luo J."/>
        </authorList>
    </citation>
    <scope>TISSUE SPECIFICITY</scope>
    <scope>INDUCTION</scope>
</reference>
<reference key="13">
    <citation type="journal article" date="2003" name="Biosci. Biotechnol. Biochem.">
        <title>Improved functional properties of the ovoinhibitor by conjugating with galactomannan.</title>
        <authorList>
            <person name="Begum S."/>
            <person name="Saito A."/>
            <person name="Xu X."/>
            <person name="Kato A."/>
        </authorList>
    </citation>
    <scope>FUNCTION</scope>
    <scope>TISSUE SPECIFICITY</scope>
    <scope>BIOTECHNOLOGY</scope>
</reference>
<reference key="14">
    <citation type="journal article" date="2003" name="Nahrung">
        <title>Expression and characterization of chicken ovoinhibitor in Pichia pastoris.</title>
        <authorList>
            <person name="Begum S."/>
            <person name="Saito A."/>
            <person name="Kato A."/>
            <person name="He J."/>
            <person name="Azakami H."/>
        </authorList>
    </citation>
    <scope>FUNCTION</scope>
    <scope>TISSUE SPECIFICITY</scope>
</reference>
<reference key="15">
    <citation type="journal article" date="2013" name="Food Chem.">
        <title>Immunoreactivity of hen egg allergens: influence on in vitro gastrointestinal digestion of the presence of other egg white proteins and of egg yolk.</title>
        <authorList>
            <person name="Martos G."/>
            <person name="Lopez-Fandino R."/>
            <person name="Molina E."/>
        </authorList>
    </citation>
    <scope>TISSUE SPECIFICITY</scope>
    <scope>ALLERGEN</scope>
</reference>
<organism>
    <name type="scientific">Gallus gallus</name>
    <name type="common">Chicken</name>
    <dbReference type="NCBI Taxonomy" id="9031"/>
    <lineage>
        <taxon>Eukaryota</taxon>
        <taxon>Metazoa</taxon>
        <taxon>Chordata</taxon>
        <taxon>Craniata</taxon>
        <taxon>Vertebrata</taxon>
        <taxon>Euteleostomi</taxon>
        <taxon>Archelosauria</taxon>
        <taxon>Archosauria</taxon>
        <taxon>Dinosauria</taxon>
        <taxon>Saurischia</taxon>
        <taxon>Theropoda</taxon>
        <taxon>Coelurosauria</taxon>
        <taxon>Aves</taxon>
        <taxon>Neognathae</taxon>
        <taxon>Galloanserae</taxon>
        <taxon>Galliformes</taxon>
        <taxon>Phasianidae</taxon>
        <taxon>Phasianinae</taxon>
        <taxon>Gallus</taxon>
    </lineage>
</organism>
<name>IOV7_CHICK</name>
<protein>
    <recommendedName>
        <fullName evidence="16 19 20 22 25">Ovoinhibitor</fullName>
        <shortName evidence="22">OI</shortName>
        <shortName evidence="19">OvoI</shortName>
    </recommendedName>
    <alternativeName>
        <fullName evidence="23">Serine protease inhibitor Kazal-type 5</fullName>
    </alternativeName>
    <allergenName evidence="23">Gal d OIH</allergenName>
</protein>
<keyword id="KW-0020">Allergen</keyword>
<keyword id="KW-0025">Alternative splicing</keyword>
<keyword id="KW-0929">Antimicrobial</keyword>
<keyword id="KW-0903">Direct protein sequencing</keyword>
<keyword id="KW-1015">Disulfide bond</keyword>
<keyword id="KW-0325">Glycoprotein</keyword>
<keyword id="KW-0646">Protease inhibitor</keyword>
<keyword id="KW-1185">Reference proteome</keyword>
<keyword id="KW-0677">Repeat</keyword>
<keyword id="KW-0964">Secreted</keyword>
<keyword id="KW-0722">Serine protease inhibitor</keyword>
<sequence length="517" mass="57005">MTDWVLHHKVGPLDMTTRYIFPLLPLPFLPHSESKRAVCAPRCSAMRTARQFVQVALALCCFADIAFGIEVNCSLYASGIGKDGTSWVACPRNLKPVCGTDGSTYSNECGICLYNREHGANVEKEYDGECRPKHVTIDCSPYLQVVRDGNTMVACPRILKPVCGSDSFTYDNECGICAYNAEHHTNISKLHDGECKLEIGSVDCSKYPSTVSKDGRTLVACPRILSPVCGTDGFTYDNECGICAHNAEQRTHVSKKHDGKCRQEIPEIDCDQYPTRKTTGGKLLVRCPRILLPVCGTDGFTYDNECGICAHNAQHGTEVKKSHDGRCKERSTPLDCTQYLSNTQNGEAITACPFILQEVCGTDGVTYSNDCSLCAHNIELGTSVAKKHDGRCREEVPELDCSKYKTSTLKDGRQVVACTMIYDPVCATNGVTYASECTLCAHNLEQRTNLGKRKNGRCEEDITKEHCREFQKVSPICTMEYVPHCGSDGVTYSNRCFFCNAYVQSNRTLNLVSMAAC</sequence>
<evidence type="ECO:0000255" key="1">
    <source>
        <dbReference type="PROSITE-ProRule" id="PRU00498"/>
    </source>
</evidence>
<evidence type="ECO:0000255" key="2">
    <source>
        <dbReference type="PROSITE-ProRule" id="PRU00798"/>
    </source>
</evidence>
<evidence type="ECO:0000269" key="3">
    <source>
    </source>
</evidence>
<evidence type="ECO:0000269" key="4">
    <source>
    </source>
</evidence>
<evidence type="ECO:0000269" key="5">
    <source>
    </source>
</evidence>
<evidence type="ECO:0000269" key="6">
    <source>
    </source>
</evidence>
<evidence type="ECO:0000269" key="7">
    <source>
    </source>
</evidence>
<evidence type="ECO:0000269" key="8">
    <source>
    </source>
</evidence>
<evidence type="ECO:0000269" key="9">
    <source>
    </source>
</evidence>
<evidence type="ECO:0000269" key="10">
    <source>
    </source>
</evidence>
<evidence type="ECO:0000269" key="11">
    <source>
    </source>
</evidence>
<evidence type="ECO:0000269" key="12">
    <source>
    </source>
</evidence>
<evidence type="ECO:0000269" key="13">
    <source>
    </source>
</evidence>
<evidence type="ECO:0000269" key="14">
    <source>
    </source>
</evidence>
<evidence type="ECO:0000269" key="15">
    <source>
    </source>
</evidence>
<evidence type="ECO:0000303" key="16">
    <source>
    </source>
</evidence>
<evidence type="ECO:0000303" key="17">
    <source>
    </source>
</evidence>
<evidence type="ECO:0000303" key="18">
    <source>
    </source>
</evidence>
<evidence type="ECO:0000303" key="19">
    <source>
    </source>
</evidence>
<evidence type="ECO:0000303" key="20">
    <source>
    </source>
</evidence>
<evidence type="ECO:0000303" key="21">
    <source>
    </source>
</evidence>
<evidence type="ECO:0000303" key="22">
    <source>
    </source>
</evidence>
<evidence type="ECO:0000305" key="23"/>
<evidence type="ECO:0000305" key="24">
    <source>
    </source>
</evidence>
<evidence type="ECO:0000312" key="25">
    <source>
        <dbReference type="EMBL" id="AAP50264.1"/>
    </source>
</evidence>
<evidence type="ECO:0000312" key="26">
    <source>
        <dbReference type="Proteomes" id="UP000000539"/>
    </source>
</evidence>